<accession>Q6TNA6</accession>
<proteinExistence type="evidence at protein level"/>
<keyword id="KW-0012">Acyltransferase</keyword>
<keyword id="KW-0614">Plasmid</keyword>
<keyword id="KW-0808">Transferase</keyword>
<reference key="1">
    <citation type="journal article" date="2004" name="J. Bacteriol.">
        <title>Characterization of CmaA, an adenylation-thiolation didomain enzyme involved in the biosynthesis of coronatine.</title>
        <authorList>
            <person name="Couch R."/>
            <person name="O'Connor S.E."/>
            <person name="Seidle H."/>
            <person name="Walsh C.T."/>
            <person name="Parry R."/>
        </authorList>
    </citation>
    <scope>NUCLEOTIDE SEQUENCE [GENOMIC DNA]</scope>
    <source>
        <strain>PG4180</strain>
        <plasmid>p4180A</plasmid>
    </source>
</reference>
<reference key="2">
    <citation type="submission" date="2015-09" db="EMBL/GenBank/DDBJ databases">
        <title>Genome announcement of multiple Pseudomonas syringae strains.</title>
        <authorList>
            <person name="Thakur S."/>
            <person name="Wang P.W."/>
            <person name="Gong Y."/>
            <person name="Weir B.S."/>
            <person name="Guttman D.S."/>
        </authorList>
    </citation>
    <scope>NUCLEOTIDE SEQUENCE [LARGE SCALE GENOMIC DNA]</scope>
    <source>
        <strain>ICMP2189</strain>
    </source>
</reference>
<reference key="3">
    <citation type="submission" date="2018-08" db="EMBL/GenBank/DDBJ databases">
        <title>Recombination of ecologically and evolutionarily significant loci maintains genetic cohesion in the Pseudomonas syringae species complex.</title>
        <authorList>
            <person name="Dillon M."/>
            <person name="Thakur S."/>
            <person name="Almeida R.N.D."/>
            <person name="Weir B.S."/>
            <person name="Guttman D.S."/>
        </authorList>
    </citation>
    <scope>NUCLEOTIDE SEQUENCE [LARGE SCALE GENOMIC DNA]</scope>
    <source>
        <strain>ICMP 4402</strain>
        <strain>ICMP 5027</strain>
        <strain>ICMP 5560</strain>
    </source>
</reference>
<reference key="4">
    <citation type="journal article" date="2005" name="Nature">
        <title>Cryptic chlorination by a non-haem iron enzyme during cyclopropyl amino acid biosynthesis.</title>
        <authorList>
            <person name="Vaillancourt F.H."/>
            <person name="Yeh E."/>
            <person name="Vosburg D.A."/>
            <person name="O'Connor S.E."/>
            <person name="Walsh C.T."/>
        </authorList>
    </citation>
    <scope>FUNCTION</scope>
    <scope>CATALYTIC ACTIVITY</scope>
    <scope>ACTIVE SITE</scope>
    <scope>MUTAGENESIS OF CYS-105</scope>
</reference>
<reference key="5">
    <citation type="journal article" date="2007" name="Biochemistry">
        <title>CmaE: a transferase shuttling aminoacyl groups between carrier protein domains in the coronamic acid biosynthetic pathway.</title>
        <authorList>
            <person name="Strieter E.R."/>
            <person name="Vaillancourt F.H."/>
            <person name="Walsh C.T."/>
        </authorList>
    </citation>
    <scope>FUNCTION</scope>
    <scope>CATALYTIC ACTIVITY</scope>
    <scope>ACTIVE SITE</scope>
    <scope>MUTAGENESIS OF CYS-105</scope>
</reference>
<sequence length="282" mass="31809">MHSLFTLNLDLERAGKVICAQSLPFDTARETLLLLSPVGTQCCYMKNAALFLISHFNLIILESDTWLAYANEAGVNPEEGVADFIRQFNAALPEPVRVDALVGYCSSAPLALLAANQGACRTLLLLNGAYFLKDDGVIKSQYERDVERMMQSIPQGNCAQVYEAVSLLHTQSTYTPSDYRYQQVRPLRELSAFRQYLTFLNNLASLELVRIAQAVKTPTLVWCGSQDRYTDTASSRYIAQLLPHSELVEDPDGQHHDFVDGHERLYLTMTRFLTRHKQRAIQ</sequence>
<gene>
    <name evidence="4" type="primary">cmaE</name>
    <name evidence="9" type="ORF">ALO37_00083</name>
    <name evidence="12" type="ORF">ALP27_100733</name>
    <name evidence="11" type="ORF">ALQ13_00274</name>
    <name evidence="10" type="ORF">ALQ75_02075</name>
</gene>
<feature type="chain" id="PRO_0000452006" description="L-allo-isoleucyltransferase">
    <location>
        <begin position="1"/>
        <end position="282"/>
    </location>
</feature>
<feature type="domain" description="AB hydrolase-1" evidence="1">
    <location>
        <begin position="169"/>
        <end position="261"/>
    </location>
</feature>
<feature type="active site" description="Acyl-thioester intermediate" evidence="7 8">
    <location>
        <position position="105"/>
    </location>
</feature>
<feature type="mutagenesis site" description="Abolishes transferase activity." evidence="2 3">
    <original>C</original>
    <variation>A</variation>
    <location>
        <position position="105"/>
    </location>
</feature>
<dbReference type="EC" id="2.3.2.28" evidence="2 3"/>
<dbReference type="EMBL" id="AY391839">
    <property type="protein sequence ID" value="AAQ93483.1"/>
    <property type="molecule type" value="Genomic_DNA"/>
</dbReference>
<dbReference type="EMBL" id="LJQL01000191">
    <property type="protein sequence ID" value="KPX44543.1"/>
    <property type="molecule type" value="Genomic_DNA"/>
</dbReference>
<dbReference type="EMBL" id="RBOL01000131">
    <property type="protein sequence ID" value="RMM81474.1"/>
    <property type="molecule type" value="Genomic_DNA"/>
</dbReference>
<dbReference type="EMBL" id="RBQV01000254">
    <property type="protein sequence ID" value="RMP96815.1"/>
    <property type="molecule type" value="Genomic_DNA"/>
</dbReference>
<dbReference type="EMBL" id="RBUC01000704">
    <property type="protein sequence ID" value="RMU44151.1"/>
    <property type="molecule type" value="Genomic_DNA"/>
</dbReference>
<dbReference type="RefSeq" id="WP_004666821.1">
    <property type="nucleotide sequence ID" value="NZ_RBVH01000262.1"/>
</dbReference>
<dbReference type="SMR" id="Q6TNA6"/>
<dbReference type="ESTHER" id="psesy-PSPTO4708">
    <property type="family name" value="6_AlphaBeta_hydrolase"/>
</dbReference>
<dbReference type="PATRIC" id="fig|318.3.peg.2000"/>
<dbReference type="GO" id="GO:0016746">
    <property type="term" value="F:acyltransferase activity"/>
    <property type="evidence" value="ECO:0007669"/>
    <property type="project" value="UniProtKB-KW"/>
</dbReference>
<dbReference type="Gene3D" id="3.40.50.1820">
    <property type="entry name" value="alpha/beta hydrolase"/>
    <property type="match status" value="1"/>
</dbReference>
<dbReference type="InterPro" id="IPR000073">
    <property type="entry name" value="AB_hydrolase_1"/>
</dbReference>
<dbReference type="InterPro" id="IPR029058">
    <property type="entry name" value="AB_hydrolase_fold"/>
</dbReference>
<dbReference type="Pfam" id="PF00561">
    <property type="entry name" value="Abhydrolase_1"/>
    <property type="match status" value="1"/>
</dbReference>
<dbReference type="SUPFAM" id="SSF53474">
    <property type="entry name" value="alpha/beta-Hydrolases"/>
    <property type="match status" value="1"/>
</dbReference>
<name>CMAE_PSESG</name>
<organism>
    <name type="scientific">Pseudomonas savastanoi pv. glycinea</name>
    <name type="common">Pseudomonas syringae pv. glycinea</name>
    <dbReference type="NCBI Taxonomy" id="318"/>
    <lineage>
        <taxon>Bacteria</taxon>
        <taxon>Pseudomonadati</taxon>
        <taxon>Pseudomonadota</taxon>
        <taxon>Gammaproteobacteria</taxon>
        <taxon>Pseudomonadales</taxon>
        <taxon>Pseudomonadaceae</taxon>
        <taxon>Pseudomonas</taxon>
    </lineage>
</organism>
<protein>
    <recommendedName>
        <fullName evidence="6">L-allo-isoleucyltransferase</fullName>
        <ecNumber evidence="2 3">2.3.2.28</ecNumber>
    </recommendedName>
    <alternativeName>
        <fullName evidence="5">Aminoacyltransferase CmaE</fullName>
    </alternativeName>
</protein>
<comment type="function">
    <text evidence="2 3">Involved in the biosynthesis of the phytotoxin coronatine (COR). Catalyzes the transfer of the aminoacyl group covalently attached to the pantetheinyl arm of CmaA to the holo-pantetheinyl arm of CmaD. During the shuttling process, CmaE generates a covalent-aminoacyl-S-Cys enzyme intermediate by the action of its donor substrate L-aminoacyl-S-CmaA and delivers it to the sulfhydryl group attached to the phosphopantetheinyl arm on CmaD.</text>
</comment>
<comment type="catalytic activity">
    <reaction evidence="2 3">
        <text>holo-[CmaD peptidyl-carrier protein] + L-alloisoleucyl-[CmaA peptidyl-carrier protein] = L-alloisoleucyl-[CmaD peptidyl-carrier protein] + holo-[CmaA peptidyl-carrier protein]</text>
        <dbReference type="Rhea" id="RHEA:45628"/>
        <dbReference type="Rhea" id="RHEA-COMP:11295"/>
        <dbReference type="Rhea" id="RHEA-COMP:11297"/>
        <dbReference type="Rhea" id="RHEA-COMP:11299"/>
        <dbReference type="Rhea" id="RHEA-COMP:11300"/>
        <dbReference type="ChEBI" id="CHEBI:64479"/>
        <dbReference type="ChEBI" id="CHEBI:85339"/>
        <dbReference type="EC" id="2.3.2.28"/>
    </reaction>
    <physiologicalReaction direction="left-to-right" evidence="2 3">
        <dbReference type="Rhea" id="RHEA:45629"/>
    </physiologicalReaction>
</comment>
<comment type="miscellaneous">
    <text evidence="3">In vitro, is able to accept L-Phe as a substrate when presented on CmaD and is able to load this aminoacyl moiety onto heterologous T domains. Thus, CmaE should be useful for shuttling different aminoacyl groups between T domains existing within heterologous nonribosomal peptide-synthetase (NRPS) assembly lines to generate natural product-like derivatives.</text>
</comment>
<comment type="similarity">
    <text evidence="6">Belongs to the AB hydrolase superfamily.</text>
</comment>
<geneLocation type="plasmid">
    <name>p4180A</name>
</geneLocation>
<evidence type="ECO:0000255" key="1"/>
<evidence type="ECO:0000269" key="2">
    <source>
    </source>
</evidence>
<evidence type="ECO:0000269" key="3">
    <source>
    </source>
</evidence>
<evidence type="ECO:0000303" key="4">
    <source>
    </source>
</evidence>
<evidence type="ECO:0000303" key="5">
    <source>
    </source>
</evidence>
<evidence type="ECO:0000305" key="6"/>
<evidence type="ECO:0000305" key="7">
    <source>
    </source>
</evidence>
<evidence type="ECO:0000305" key="8">
    <source>
    </source>
</evidence>
<evidence type="ECO:0000312" key="9">
    <source>
        <dbReference type="EMBL" id="KPX44543.1"/>
    </source>
</evidence>
<evidence type="ECO:0000312" key="10">
    <source>
        <dbReference type="EMBL" id="RMM81474.1"/>
    </source>
</evidence>
<evidence type="ECO:0000312" key="11">
    <source>
        <dbReference type="EMBL" id="RMP96815.1"/>
    </source>
</evidence>
<evidence type="ECO:0000312" key="12">
    <source>
        <dbReference type="EMBL" id="RMU44151.1"/>
    </source>
</evidence>